<keyword id="KW-1185">Reference proteome</keyword>
<keyword id="KW-0687">Ribonucleoprotein</keyword>
<keyword id="KW-0689">Ribosomal protein</keyword>
<keyword id="KW-0694">RNA-binding</keyword>
<keyword id="KW-0699">rRNA-binding</keyword>
<feature type="chain" id="PRO_0000129879" description="Small ribosomal subunit protein uS19">
    <location>
        <begin position="1"/>
        <end position="91"/>
    </location>
</feature>
<evidence type="ECO:0000255" key="1">
    <source>
        <dbReference type="HAMAP-Rule" id="MF_00531"/>
    </source>
</evidence>
<evidence type="ECO:0000305" key="2"/>
<organism>
    <name type="scientific">Prochlorococcus marinus (strain SARG / CCMP1375 / SS120)</name>
    <dbReference type="NCBI Taxonomy" id="167539"/>
    <lineage>
        <taxon>Bacteria</taxon>
        <taxon>Bacillati</taxon>
        <taxon>Cyanobacteriota</taxon>
        <taxon>Cyanophyceae</taxon>
        <taxon>Synechococcales</taxon>
        <taxon>Prochlorococcaceae</taxon>
        <taxon>Prochlorococcus</taxon>
    </lineage>
</organism>
<dbReference type="EMBL" id="AE017126">
    <property type="protein sequence ID" value="AAQ00752.1"/>
    <property type="molecule type" value="Genomic_DNA"/>
</dbReference>
<dbReference type="RefSeq" id="NP_876099.1">
    <property type="nucleotide sequence ID" value="NC_005042.1"/>
</dbReference>
<dbReference type="RefSeq" id="WP_011125857.1">
    <property type="nucleotide sequence ID" value="NC_005042.1"/>
</dbReference>
<dbReference type="SMR" id="Q7V9W6"/>
<dbReference type="STRING" id="167539.Pro_1708"/>
<dbReference type="EnsemblBacteria" id="AAQ00752">
    <property type="protein sequence ID" value="AAQ00752"/>
    <property type="gene ID" value="Pro_1708"/>
</dbReference>
<dbReference type="KEGG" id="pma:Pro_1708"/>
<dbReference type="PATRIC" id="fig|167539.5.peg.1803"/>
<dbReference type="eggNOG" id="COG0185">
    <property type="taxonomic scope" value="Bacteria"/>
</dbReference>
<dbReference type="HOGENOM" id="CLU_144911_0_1_3"/>
<dbReference type="OrthoDB" id="9797833at2"/>
<dbReference type="Proteomes" id="UP000001420">
    <property type="component" value="Chromosome"/>
</dbReference>
<dbReference type="GO" id="GO:0005737">
    <property type="term" value="C:cytoplasm"/>
    <property type="evidence" value="ECO:0007669"/>
    <property type="project" value="UniProtKB-ARBA"/>
</dbReference>
<dbReference type="GO" id="GO:0015935">
    <property type="term" value="C:small ribosomal subunit"/>
    <property type="evidence" value="ECO:0007669"/>
    <property type="project" value="InterPro"/>
</dbReference>
<dbReference type="GO" id="GO:0019843">
    <property type="term" value="F:rRNA binding"/>
    <property type="evidence" value="ECO:0007669"/>
    <property type="project" value="UniProtKB-UniRule"/>
</dbReference>
<dbReference type="GO" id="GO:0003735">
    <property type="term" value="F:structural constituent of ribosome"/>
    <property type="evidence" value="ECO:0007669"/>
    <property type="project" value="InterPro"/>
</dbReference>
<dbReference type="GO" id="GO:0000028">
    <property type="term" value="P:ribosomal small subunit assembly"/>
    <property type="evidence" value="ECO:0007669"/>
    <property type="project" value="TreeGrafter"/>
</dbReference>
<dbReference type="GO" id="GO:0006412">
    <property type="term" value="P:translation"/>
    <property type="evidence" value="ECO:0007669"/>
    <property type="project" value="UniProtKB-UniRule"/>
</dbReference>
<dbReference type="FunFam" id="3.30.860.10:FF:000001">
    <property type="entry name" value="30S ribosomal protein S19"/>
    <property type="match status" value="1"/>
</dbReference>
<dbReference type="Gene3D" id="3.30.860.10">
    <property type="entry name" value="30s Ribosomal Protein S19, Chain A"/>
    <property type="match status" value="1"/>
</dbReference>
<dbReference type="HAMAP" id="MF_00531">
    <property type="entry name" value="Ribosomal_uS19"/>
    <property type="match status" value="1"/>
</dbReference>
<dbReference type="InterPro" id="IPR002222">
    <property type="entry name" value="Ribosomal_uS19"/>
</dbReference>
<dbReference type="InterPro" id="IPR005732">
    <property type="entry name" value="Ribosomal_uS19_bac-type"/>
</dbReference>
<dbReference type="InterPro" id="IPR020934">
    <property type="entry name" value="Ribosomal_uS19_CS"/>
</dbReference>
<dbReference type="InterPro" id="IPR023575">
    <property type="entry name" value="Ribosomal_uS19_SF"/>
</dbReference>
<dbReference type="NCBIfam" id="TIGR01050">
    <property type="entry name" value="rpsS_bact"/>
    <property type="match status" value="1"/>
</dbReference>
<dbReference type="PANTHER" id="PTHR11880">
    <property type="entry name" value="RIBOSOMAL PROTEIN S19P FAMILY MEMBER"/>
    <property type="match status" value="1"/>
</dbReference>
<dbReference type="PANTHER" id="PTHR11880:SF8">
    <property type="entry name" value="SMALL RIBOSOMAL SUBUNIT PROTEIN US19M"/>
    <property type="match status" value="1"/>
</dbReference>
<dbReference type="Pfam" id="PF00203">
    <property type="entry name" value="Ribosomal_S19"/>
    <property type="match status" value="1"/>
</dbReference>
<dbReference type="PIRSF" id="PIRSF002144">
    <property type="entry name" value="Ribosomal_S19"/>
    <property type="match status" value="1"/>
</dbReference>
<dbReference type="PRINTS" id="PR00975">
    <property type="entry name" value="RIBOSOMALS19"/>
</dbReference>
<dbReference type="SUPFAM" id="SSF54570">
    <property type="entry name" value="Ribosomal protein S19"/>
    <property type="match status" value="1"/>
</dbReference>
<dbReference type="PROSITE" id="PS00323">
    <property type="entry name" value="RIBOSOMAL_S19"/>
    <property type="match status" value="1"/>
</dbReference>
<comment type="function">
    <text evidence="1">Protein S19 forms a complex with S13 that binds strongly to the 16S ribosomal RNA.</text>
</comment>
<comment type="similarity">
    <text evidence="1">Belongs to the universal ribosomal protein uS19 family.</text>
</comment>
<accession>Q7V9W6</accession>
<gene>
    <name evidence="1" type="primary">rpsS</name>
    <name evidence="1" type="synonym">rps19</name>
    <name type="ordered locus">Pro_1708</name>
</gene>
<protein>
    <recommendedName>
        <fullName evidence="1">Small ribosomal subunit protein uS19</fullName>
    </recommendedName>
    <alternativeName>
        <fullName evidence="2">30S ribosomal protein S19</fullName>
    </alternativeName>
</protein>
<name>RS19_PROMA</name>
<reference key="1">
    <citation type="journal article" date="2003" name="Proc. Natl. Acad. Sci. U.S.A.">
        <title>Genome sequence of the cyanobacterium Prochlorococcus marinus SS120, a nearly minimal oxyphototrophic genome.</title>
        <authorList>
            <person name="Dufresne A."/>
            <person name="Salanoubat M."/>
            <person name="Partensky F."/>
            <person name="Artiguenave F."/>
            <person name="Axmann I.M."/>
            <person name="Barbe V."/>
            <person name="Duprat S."/>
            <person name="Galperin M.Y."/>
            <person name="Koonin E.V."/>
            <person name="Le Gall F."/>
            <person name="Makarova K.S."/>
            <person name="Ostrowski M."/>
            <person name="Oztas S."/>
            <person name="Robert C."/>
            <person name="Rogozin I.B."/>
            <person name="Scanlan D.J."/>
            <person name="Tandeau de Marsac N."/>
            <person name="Weissenbach J."/>
            <person name="Wincker P."/>
            <person name="Wolf Y.I."/>
            <person name="Hess W.R."/>
        </authorList>
    </citation>
    <scope>NUCLEOTIDE SEQUENCE [LARGE SCALE GENOMIC DNA]</scope>
    <source>
        <strain>SARG / CCMP1375 / SS120</strain>
    </source>
</reference>
<proteinExistence type="inferred from homology"/>
<sequence>MGRSLKKGPFIADSLIKKVEKQNSDDDKSVIKTWSRASTILPMMIGHTIAVHNGKTHVPVFITEQMVGHKLGEFAPTRTYRGHMKDKKGGR</sequence>